<accession>A8WMM4</accession>
<dbReference type="EMBL" id="HE600987">
    <property type="protein sequence ID" value="CAP21729.2"/>
    <property type="molecule type" value="Genomic_DNA"/>
</dbReference>
<dbReference type="RefSeq" id="XP_045091516.1">
    <property type="nucleotide sequence ID" value="XM_045244191.1"/>
</dbReference>
<dbReference type="SMR" id="A8WMM4"/>
<dbReference type="FunCoup" id="A8WMM4">
    <property type="interactions" value="3137"/>
</dbReference>
<dbReference type="STRING" id="6238.A8WMM4"/>
<dbReference type="EnsemblMetazoa" id="CBG00292.1">
    <property type="protein sequence ID" value="CBG00292.1"/>
    <property type="gene ID" value="WBGene00023704"/>
</dbReference>
<dbReference type="GeneID" id="8580707"/>
<dbReference type="WormBase" id="CBG00292">
    <property type="protein sequence ID" value="CBP32563"/>
    <property type="gene ID" value="WBGene00023704"/>
</dbReference>
<dbReference type="eggNOG" id="KOG1763">
    <property type="taxonomic scope" value="Eukaryota"/>
</dbReference>
<dbReference type="HOGENOM" id="CLU_042870_3_0_1"/>
<dbReference type="InParanoid" id="A8WMM4"/>
<dbReference type="OMA" id="AMIFKPV"/>
<dbReference type="Proteomes" id="UP000008549">
    <property type="component" value="Unassembled WGS sequence"/>
</dbReference>
<dbReference type="GO" id="GO:0005829">
    <property type="term" value="C:cytosol"/>
    <property type="evidence" value="ECO:0000318"/>
    <property type="project" value="GO_Central"/>
</dbReference>
<dbReference type="GO" id="GO:0008270">
    <property type="term" value="F:zinc ion binding"/>
    <property type="evidence" value="ECO:0007669"/>
    <property type="project" value="UniProtKB-KW"/>
</dbReference>
<dbReference type="GO" id="GO:0002181">
    <property type="term" value="P:cytoplasmic translation"/>
    <property type="evidence" value="ECO:0000318"/>
    <property type="project" value="GO_Central"/>
</dbReference>
<dbReference type="Gene3D" id="6.20.400.10">
    <property type="match status" value="1"/>
</dbReference>
<dbReference type="Gene3D" id="4.10.1000.10">
    <property type="entry name" value="Zinc finger, CCCH-type"/>
    <property type="match status" value="1"/>
</dbReference>
<dbReference type="InterPro" id="IPR032378">
    <property type="entry name" value="ZC3H15/TMA46_C"/>
</dbReference>
<dbReference type="InterPro" id="IPR000571">
    <property type="entry name" value="Znf_CCCH"/>
</dbReference>
<dbReference type="InterPro" id="IPR036855">
    <property type="entry name" value="Znf_CCCH_sf"/>
</dbReference>
<dbReference type="PANTHER" id="PTHR12681:SF0">
    <property type="entry name" value="ZINC FINGER CCCH DOMAIN-CONTAINING PROTEIN 15"/>
    <property type="match status" value="1"/>
</dbReference>
<dbReference type="PANTHER" id="PTHR12681">
    <property type="entry name" value="ZINC FINGER-CONTAINING PROTEIN P48ZNF"/>
    <property type="match status" value="1"/>
</dbReference>
<dbReference type="Pfam" id="PF16543">
    <property type="entry name" value="DFRP_C"/>
    <property type="match status" value="1"/>
</dbReference>
<dbReference type="Pfam" id="PF00642">
    <property type="entry name" value="zf-CCCH"/>
    <property type="match status" value="1"/>
</dbReference>
<dbReference type="SMART" id="SM00356">
    <property type="entry name" value="ZnF_C3H1"/>
    <property type="match status" value="2"/>
</dbReference>
<dbReference type="SUPFAM" id="SSF90229">
    <property type="entry name" value="CCCH zinc finger"/>
    <property type="match status" value="1"/>
</dbReference>
<dbReference type="PROSITE" id="PS50103">
    <property type="entry name" value="ZF_C3H1"/>
    <property type="match status" value="2"/>
</dbReference>
<organism>
    <name type="scientific">Caenorhabditis briggsae</name>
    <dbReference type="NCBI Taxonomy" id="6238"/>
    <lineage>
        <taxon>Eukaryota</taxon>
        <taxon>Metazoa</taxon>
        <taxon>Ecdysozoa</taxon>
        <taxon>Nematoda</taxon>
        <taxon>Chromadorea</taxon>
        <taxon>Rhabditida</taxon>
        <taxon>Rhabditina</taxon>
        <taxon>Rhabditomorpha</taxon>
        <taxon>Rhabditoidea</taxon>
        <taxon>Rhabditidae</taxon>
        <taxon>Peloderinae</taxon>
        <taxon>Caenorhabditis</taxon>
    </lineage>
</organism>
<gene>
    <name type="ORF">CBG00292</name>
</gene>
<feature type="chain" id="PRO_0000324650" description="Zinc finger CCCH domain-containing protein 15 homolog">
    <location>
        <begin position="1"/>
        <end position="374"/>
    </location>
</feature>
<feature type="zinc finger region" description="C3H1-type 1" evidence="1">
    <location>
        <begin position="89"/>
        <end position="116"/>
    </location>
</feature>
<feature type="zinc finger region" description="C3H1-type 2" evidence="1">
    <location>
        <begin position="167"/>
        <end position="197"/>
    </location>
</feature>
<sequence length="374" mass="42803">MPPKQAPSKKAENKRKEKVIEDKTFGLKNKKGNKNQKFVAQIENQVRNNNTRMDLVRQQEAAKKKEKDELLDIQNLLKPVEQKVAKDVDPKSLLCVFFKQGLCGKGAKCKFSHDLAVAQKTAKKNLYADSREVEKDETNENWDKEKLDEVVNKKNKGGHVIDIVCKYFLEAVENNKYGWFWECPNGGDKCQYRHCLPEGYVLKKDRKAMEAQKEDEISIEELVEKERAALNSKDLTKLTLQTFVAWKKKKLKERKEKEEADLKAKKEKIKSGKHNGMSGRDLFLFDANLINNDDDEAGDIEMEKEEVDENEKVFEIDANFFKFDGMDDELTNQMSNSTAAVSSVAGAVAKMDINEDLFDIDEDVGDLDSDSDED</sequence>
<protein>
    <recommendedName>
        <fullName>Zinc finger CCCH domain-containing protein 15 homolog</fullName>
    </recommendedName>
</protein>
<name>ZC3HF_CAEBR</name>
<proteinExistence type="inferred from homology"/>
<evidence type="ECO:0000255" key="1">
    <source>
        <dbReference type="PROSITE-ProRule" id="PRU00723"/>
    </source>
</evidence>
<evidence type="ECO:0000305" key="2"/>
<comment type="similarity">
    <text evidence="2">Belongs to the ZC3H15/TMA46 family.</text>
</comment>
<keyword id="KW-0479">Metal-binding</keyword>
<keyword id="KW-1185">Reference proteome</keyword>
<keyword id="KW-0677">Repeat</keyword>
<keyword id="KW-0862">Zinc</keyword>
<keyword id="KW-0863">Zinc-finger</keyword>
<reference key="1">
    <citation type="journal article" date="2003" name="PLoS Biol.">
        <title>The genome sequence of Caenorhabditis briggsae: a platform for comparative genomics.</title>
        <authorList>
            <person name="Stein L.D."/>
            <person name="Bao Z."/>
            <person name="Blasiar D."/>
            <person name="Blumenthal T."/>
            <person name="Brent M.R."/>
            <person name="Chen N."/>
            <person name="Chinwalla A."/>
            <person name="Clarke L."/>
            <person name="Clee C."/>
            <person name="Coghlan A."/>
            <person name="Coulson A."/>
            <person name="D'Eustachio P."/>
            <person name="Fitch D.H.A."/>
            <person name="Fulton L.A."/>
            <person name="Fulton R.E."/>
            <person name="Griffiths-Jones S."/>
            <person name="Harris T.W."/>
            <person name="Hillier L.W."/>
            <person name="Kamath R."/>
            <person name="Kuwabara P.E."/>
            <person name="Mardis E.R."/>
            <person name="Marra M.A."/>
            <person name="Miner T.L."/>
            <person name="Minx P."/>
            <person name="Mullikin J.C."/>
            <person name="Plumb R.W."/>
            <person name="Rogers J."/>
            <person name="Schein J.E."/>
            <person name="Sohrmann M."/>
            <person name="Spieth J."/>
            <person name="Stajich J.E."/>
            <person name="Wei C."/>
            <person name="Willey D."/>
            <person name="Wilson R.K."/>
            <person name="Durbin R.M."/>
            <person name="Waterston R.H."/>
        </authorList>
    </citation>
    <scope>NUCLEOTIDE SEQUENCE [LARGE SCALE GENOMIC DNA]</scope>
    <source>
        <strain>AF16</strain>
    </source>
</reference>